<evidence type="ECO:0000250" key="1"/>
<evidence type="ECO:0000255" key="2"/>
<evidence type="ECO:0000305" key="3"/>
<accession>Q8FVU0</accession>
<accession>G0KDA5</accession>
<reference key="1">
    <citation type="journal article" date="2002" name="Proc. Natl. Acad. Sci. U.S.A.">
        <title>The Brucella suis genome reveals fundamental similarities between animal and plant pathogens and symbionts.</title>
        <authorList>
            <person name="Paulsen I.T."/>
            <person name="Seshadri R."/>
            <person name="Nelson K.E."/>
            <person name="Eisen J.A."/>
            <person name="Heidelberg J.F."/>
            <person name="Read T.D."/>
            <person name="Dodson R.J."/>
            <person name="Umayam L.A."/>
            <person name="Brinkac L.M."/>
            <person name="Beanan M.J."/>
            <person name="Daugherty S.C."/>
            <person name="DeBoy R.T."/>
            <person name="Durkin A.S."/>
            <person name="Kolonay J.F."/>
            <person name="Madupu R."/>
            <person name="Nelson W.C."/>
            <person name="Ayodeji B."/>
            <person name="Kraul M."/>
            <person name="Shetty J."/>
            <person name="Malek J.A."/>
            <person name="Van Aken S.E."/>
            <person name="Riedmuller S."/>
            <person name="Tettelin H."/>
            <person name="Gill S.R."/>
            <person name="White O."/>
            <person name="Salzberg S.L."/>
            <person name="Hoover D.L."/>
            <person name="Lindler L.E."/>
            <person name="Halling S.M."/>
            <person name="Boyle S.M."/>
            <person name="Fraser C.M."/>
        </authorList>
    </citation>
    <scope>NUCLEOTIDE SEQUENCE [LARGE SCALE GENOMIC DNA]</scope>
    <source>
        <strain>1330</strain>
    </source>
</reference>
<reference key="2">
    <citation type="journal article" date="2011" name="J. Bacteriol.">
        <title>Revised genome sequence of Brucella suis 1330.</title>
        <authorList>
            <person name="Tae H."/>
            <person name="Shallom S."/>
            <person name="Settlage R."/>
            <person name="Preston D."/>
            <person name="Adams L.G."/>
            <person name="Garner H.R."/>
        </authorList>
    </citation>
    <scope>NUCLEOTIDE SEQUENCE [LARGE SCALE GENOMIC DNA]</scope>
    <source>
        <strain>1330</strain>
    </source>
</reference>
<feature type="signal peptide" evidence="2">
    <location>
        <begin position="1"/>
        <end position="26"/>
    </location>
</feature>
<feature type="chain" id="PRO_0000361302" description="Lectin-like protein BA14k">
    <location>
        <begin position="27"/>
        <end position="147"/>
    </location>
</feature>
<feature type="transmembrane region" description="Helical" evidence="2">
    <location>
        <begin position="80"/>
        <end position="100"/>
    </location>
</feature>
<dbReference type="EMBL" id="AE014292">
    <property type="protein sequence ID" value="AAN33917.1"/>
    <property type="molecule type" value="Genomic_DNA"/>
</dbReference>
<dbReference type="EMBL" id="CP002998">
    <property type="protein sequence ID" value="AEM20193.1"/>
    <property type="molecule type" value="Genomic_DNA"/>
</dbReference>
<dbReference type="PIR" id="AG3578">
    <property type="entry name" value="AG3578"/>
</dbReference>
<dbReference type="RefSeq" id="WP_002965908.1">
    <property type="nucleotide sequence ID" value="NZ_KN046805.1"/>
</dbReference>
<dbReference type="KEGG" id="bms:BRA0735"/>
<dbReference type="KEGG" id="bsi:BS1330_II0728"/>
<dbReference type="PATRIC" id="fig|204722.21.peg.1321"/>
<dbReference type="HOGENOM" id="CLU_095992_0_0_5"/>
<dbReference type="PhylomeDB" id="Q8FVU0"/>
<dbReference type="Proteomes" id="UP000007104">
    <property type="component" value="Chromosome II"/>
</dbReference>
<dbReference type="GO" id="GO:0005886">
    <property type="term" value="C:plasma membrane"/>
    <property type="evidence" value="ECO:0007669"/>
    <property type="project" value="UniProtKB-SubCell"/>
</dbReference>
<dbReference type="GO" id="GO:0030246">
    <property type="term" value="F:carbohydrate binding"/>
    <property type="evidence" value="ECO:0007669"/>
    <property type="project" value="UniProtKB-KW"/>
</dbReference>
<dbReference type="InterPro" id="IPR012413">
    <property type="entry name" value="BA14K"/>
</dbReference>
<dbReference type="Pfam" id="PF07886">
    <property type="entry name" value="BA14K"/>
    <property type="match status" value="1"/>
</dbReference>
<organism>
    <name type="scientific">Brucella suis biovar 1 (strain 1330)</name>
    <dbReference type="NCBI Taxonomy" id="204722"/>
    <lineage>
        <taxon>Bacteria</taxon>
        <taxon>Pseudomonadati</taxon>
        <taxon>Pseudomonadota</taxon>
        <taxon>Alphaproteobacteria</taxon>
        <taxon>Hyphomicrobiales</taxon>
        <taxon>Brucellaceae</taxon>
        <taxon>Brucella/Ochrobactrum group</taxon>
        <taxon>Brucella</taxon>
    </lineage>
</organism>
<keyword id="KW-1003">Cell membrane</keyword>
<keyword id="KW-0430">Lectin</keyword>
<keyword id="KW-0472">Membrane</keyword>
<keyword id="KW-0732">Signal</keyword>
<keyword id="KW-0812">Transmembrane</keyword>
<keyword id="KW-1133">Transmembrane helix</keyword>
<keyword id="KW-0843">Virulence</keyword>
<sequence>MNSFRKTCAGALALIFGATSIVPTVAAPMNMDRPAINQNVIQARAHYRPQNYNRGHRPGYWHGHRGYRHYRHGYRRHNDGWWYPLAAFGAGAIIGGAISQPRPVYRAPAGSPHVQWCYSRYKSYRASDNTFQPYNGPRKQCRSPYSR</sequence>
<proteinExistence type="inferred from homology"/>
<comment type="function">
    <text evidence="1">Has immunoglobulin-binding and hemagglutination properties, and can bind to mannose. Essential for virulence. May be involved in LPS biosynthesis or polysaccharide transport (By similarity).</text>
</comment>
<comment type="subcellular location">
    <subcellularLocation>
        <location evidence="3">Cell membrane</location>
        <topology evidence="3">Single-pass membrane protein</topology>
    </subcellularLocation>
</comment>
<comment type="similarity">
    <text evidence="3">Belongs to the BA14k family.</text>
</comment>
<protein>
    <recommendedName>
        <fullName>Lectin-like protein BA14k</fullName>
    </recommendedName>
</protein>
<name>14KL_BRUSU</name>
<gene>
    <name type="ordered locus">BRA0735</name>
    <name type="ordered locus">BS1330_II0728</name>
</gene>